<reference key="1">
    <citation type="journal article" date="2011" name="PLoS Genet.">
        <title>Whole-genome comparison reveals novel genetic elements that characterize the genome of industrial strains of Saccharomyces cerevisiae.</title>
        <authorList>
            <person name="Borneman A.R."/>
            <person name="Desany B.A."/>
            <person name="Riches D."/>
            <person name="Affourtit J.P."/>
            <person name="Forgan A.H."/>
            <person name="Pretorius I.S."/>
            <person name="Egholm M."/>
            <person name="Chambers P.J."/>
        </authorList>
    </citation>
    <scope>NUCLEOTIDE SEQUENCE [LARGE SCALE GENOMIC DNA]</scope>
    <source>
        <strain>FostersO</strain>
    </source>
</reference>
<name>BL1S4_YEASO</name>
<evidence type="ECO:0000250" key="1"/>
<evidence type="ECO:0000255" key="2"/>
<evidence type="ECO:0000256" key="3">
    <source>
        <dbReference type="SAM" id="MobiDB-lite"/>
    </source>
</evidence>
<evidence type="ECO:0000305" key="4"/>
<organism>
    <name type="scientific">Saccharomyces cerevisiae (strain FostersO)</name>
    <name type="common">Baker's yeast</name>
    <dbReference type="NCBI Taxonomy" id="764101"/>
    <lineage>
        <taxon>Eukaryota</taxon>
        <taxon>Fungi</taxon>
        <taxon>Dikarya</taxon>
        <taxon>Ascomycota</taxon>
        <taxon>Saccharomycotina</taxon>
        <taxon>Saccharomycetes</taxon>
        <taxon>Saccharomycetales</taxon>
        <taxon>Saccharomycetaceae</taxon>
        <taxon>Saccharomyces</taxon>
    </lineage>
</organism>
<dbReference type="EMBL" id="AEEZ01000020">
    <property type="protein sequence ID" value="EGA62878.1"/>
    <property type="molecule type" value="Genomic_DNA"/>
</dbReference>
<dbReference type="SMR" id="E7NG53"/>
<dbReference type="HOGENOM" id="CLU_141728_1_0_1"/>
<dbReference type="OMA" id="HFDMLDQ"/>
<dbReference type="GO" id="GO:0031083">
    <property type="term" value="C:BLOC-1 complex"/>
    <property type="evidence" value="ECO:0007669"/>
    <property type="project" value="InterPro"/>
</dbReference>
<dbReference type="GO" id="GO:0005737">
    <property type="term" value="C:cytoplasm"/>
    <property type="evidence" value="ECO:0007669"/>
    <property type="project" value="UniProtKB-SubCell"/>
</dbReference>
<dbReference type="GO" id="GO:0007032">
    <property type="term" value="P:endosome organization"/>
    <property type="evidence" value="ECO:0007669"/>
    <property type="project" value="TreeGrafter"/>
</dbReference>
<dbReference type="CDD" id="cd24144">
    <property type="entry name" value="BLOC1_CNL1"/>
    <property type="match status" value="1"/>
</dbReference>
<dbReference type="InterPro" id="IPR034455">
    <property type="entry name" value="CNL1"/>
</dbReference>
<dbReference type="PANTHER" id="PTHR39145">
    <property type="entry name" value="BIOGENESIS OF LYSOSOME-RELATED ORGANELLES COMPLEX 1 SUBUNIT CNL1"/>
    <property type="match status" value="1"/>
</dbReference>
<dbReference type="PANTHER" id="PTHR39145:SF1">
    <property type="entry name" value="BIOGENESIS OF LYSOSOME-RELATED ORGANELLES COMPLEX 1 SUBUNIT CNL1"/>
    <property type="match status" value="1"/>
</dbReference>
<proteinExistence type="inferred from homology"/>
<keyword id="KW-0175">Coiled coil</keyword>
<keyword id="KW-0963">Cytoplasm</keyword>
<keyword id="KW-0813">Transport</keyword>
<sequence>MQDNSSHSRESASAGDDPLGIDKLTVDYDYLLYKIRDYVQSIQLDTTELCKKQNEVMVNGIIENTIDKNIAKFKELLEKCDTLENHYEMLNQLAIITDTFKERIAEAVNNYNSLKKGASKSK</sequence>
<comment type="function">
    <text evidence="1">Component of the biogenesis of lysosome-related organelles complex-1 (BLOC-1), a complex that is involved in endosomal cargo sorting.</text>
</comment>
<comment type="subunit">
    <text evidence="1">Component of the biogenesis of lysosome-related organelles complex-1 (BLOC-1) composed of at least BLI1, BLS1, CNL1, KXD1, SNN1 and VAB2.</text>
</comment>
<comment type="subcellular location">
    <subcellularLocation>
        <location evidence="1">Cytoplasm</location>
    </subcellularLocation>
    <text evidence="1">Punctate pattern.</text>
</comment>
<comment type="similarity">
    <text evidence="4">Belongs to the BLOC1S4 family.</text>
</comment>
<gene>
    <name type="primary">CLN1</name>
    <name type="ORF">FOSTERSO_0888</name>
</gene>
<protein>
    <recommendedName>
        <fullName>Biogenesis of lysosome-related organelles complex 1 subunit CNL1</fullName>
        <shortName>BLOC-1 subunit CNL1</shortName>
    </recommendedName>
    <alternativeName>
        <fullName>CNO-like protein 1</fullName>
    </alternativeName>
</protein>
<feature type="chain" id="PRO_0000410653" description="Biogenesis of lysosome-related organelles complex 1 subunit CNL1">
    <location>
        <begin position="1"/>
        <end position="122"/>
    </location>
</feature>
<feature type="region of interest" description="Disordered" evidence="3">
    <location>
        <begin position="1"/>
        <end position="21"/>
    </location>
</feature>
<feature type="coiled-coil region" evidence="2">
    <location>
        <begin position="63"/>
        <end position="95"/>
    </location>
</feature>
<feature type="compositionally biased region" description="Basic and acidic residues" evidence="3">
    <location>
        <begin position="1"/>
        <end position="10"/>
    </location>
</feature>
<accession>E7NG53</accession>